<gene>
    <name type="primary">CAF1-10</name>
    <name type="ordered locus">At5g10960</name>
    <name type="ORF">T30N20_230</name>
</gene>
<comment type="function">
    <text evidence="1">Ubiquitous transcription factor required for a diverse set of processes. It is a component of the CCR4 complex involved in the control of gene expression (By similarity).</text>
</comment>
<comment type="catalytic activity">
    <reaction>
        <text>Exonucleolytic cleavage of poly(A) to 5'-AMP.</text>
        <dbReference type="EC" id="3.1.13.4"/>
    </reaction>
</comment>
<comment type="cofactor">
    <cofactor evidence="1">
        <name>a divalent metal cation</name>
        <dbReference type="ChEBI" id="CHEBI:60240"/>
    </cofactor>
</comment>
<comment type="subunit">
    <text evidence="1">Component of the CCR4-NOT complex, at least composed of CRR4 and CAF1 proteins.</text>
</comment>
<comment type="subcellular location">
    <subcellularLocation>
        <location evidence="1">Nucleus</location>
    </subcellularLocation>
    <subcellularLocation>
        <location evidence="1">Cytoplasm</location>
    </subcellularLocation>
</comment>
<comment type="similarity">
    <text evidence="2">Belongs to the CAF1 family.</text>
</comment>
<evidence type="ECO:0000250" key="1"/>
<evidence type="ECO:0000305" key="2"/>
<feature type="chain" id="PRO_0000371560" description="Probable CCR4-associated factor 1 homolog 10">
    <location>
        <begin position="1"/>
        <end position="277"/>
    </location>
</feature>
<feature type="binding site" evidence="1">
    <location>
        <position position="40"/>
    </location>
    <ligand>
        <name>a divalent metal cation</name>
        <dbReference type="ChEBI" id="CHEBI:60240"/>
        <note>catalytic</note>
    </ligand>
</feature>
<feature type="binding site" evidence="1">
    <location>
        <position position="42"/>
    </location>
    <ligand>
        <name>a divalent metal cation</name>
        <dbReference type="ChEBI" id="CHEBI:60240"/>
        <note>catalytic</note>
    </ligand>
</feature>
<feature type="binding site" evidence="1">
    <location>
        <position position="166"/>
    </location>
    <ligand>
        <name>a divalent metal cation</name>
        <dbReference type="ChEBI" id="CHEBI:60240"/>
        <note>catalytic</note>
    </ligand>
</feature>
<feature type="binding site" evidence="1">
    <location>
        <position position="235"/>
    </location>
    <ligand>
        <name>a divalent metal cation</name>
        <dbReference type="ChEBI" id="CHEBI:60240"/>
        <note>catalytic</note>
    </ligand>
</feature>
<feature type="sequence conflict" description="In Ref. 3; AAK92792." evidence="2" ref="3">
    <original>L</original>
    <variation>P</variation>
    <location>
        <position position="246"/>
    </location>
</feature>
<protein>
    <recommendedName>
        <fullName>Probable CCR4-associated factor 1 homolog 10</fullName>
        <ecNumber>3.1.13.4</ecNumber>
    </recommendedName>
</protein>
<organism>
    <name type="scientific">Arabidopsis thaliana</name>
    <name type="common">Mouse-ear cress</name>
    <dbReference type="NCBI Taxonomy" id="3702"/>
    <lineage>
        <taxon>Eukaryota</taxon>
        <taxon>Viridiplantae</taxon>
        <taxon>Streptophyta</taxon>
        <taxon>Embryophyta</taxon>
        <taxon>Tracheophyta</taxon>
        <taxon>Spermatophyta</taxon>
        <taxon>Magnoliopsida</taxon>
        <taxon>eudicotyledons</taxon>
        <taxon>Gunneridae</taxon>
        <taxon>Pentapetalae</taxon>
        <taxon>rosids</taxon>
        <taxon>malvids</taxon>
        <taxon>Brassicales</taxon>
        <taxon>Brassicaceae</taxon>
        <taxon>Camelineae</taxon>
        <taxon>Arabidopsis</taxon>
    </lineage>
</organism>
<reference key="1">
    <citation type="journal article" date="2000" name="Nature">
        <title>Sequence and analysis of chromosome 5 of the plant Arabidopsis thaliana.</title>
        <authorList>
            <person name="Tabata S."/>
            <person name="Kaneko T."/>
            <person name="Nakamura Y."/>
            <person name="Kotani H."/>
            <person name="Kato T."/>
            <person name="Asamizu E."/>
            <person name="Miyajima N."/>
            <person name="Sasamoto S."/>
            <person name="Kimura T."/>
            <person name="Hosouchi T."/>
            <person name="Kawashima K."/>
            <person name="Kohara M."/>
            <person name="Matsumoto M."/>
            <person name="Matsuno A."/>
            <person name="Muraki A."/>
            <person name="Nakayama S."/>
            <person name="Nakazaki N."/>
            <person name="Naruo K."/>
            <person name="Okumura S."/>
            <person name="Shinpo S."/>
            <person name="Takeuchi C."/>
            <person name="Wada T."/>
            <person name="Watanabe A."/>
            <person name="Yamada M."/>
            <person name="Yasuda M."/>
            <person name="Sato S."/>
            <person name="de la Bastide M."/>
            <person name="Huang E."/>
            <person name="Spiegel L."/>
            <person name="Gnoj L."/>
            <person name="O'Shaughnessy A."/>
            <person name="Preston R."/>
            <person name="Habermann K."/>
            <person name="Murray J."/>
            <person name="Johnson D."/>
            <person name="Rohlfing T."/>
            <person name="Nelson J."/>
            <person name="Stoneking T."/>
            <person name="Pepin K."/>
            <person name="Spieth J."/>
            <person name="Sekhon M."/>
            <person name="Armstrong J."/>
            <person name="Becker M."/>
            <person name="Belter E."/>
            <person name="Cordum H."/>
            <person name="Cordes M."/>
            <person name="Courtney L."/>
            <person name="Courtney W."/>
            <person name="Dante M."/>
            <person name="Du H."/>
            <person name="Edwards J."/>
            <person name="Fryman J."/>
            <person name="Haakensen B."/>
            <person name="Lamar E."/>
            <person name="Latreille P."/>
            <person name="Leonard S."/>
            <person name="Meyer R."/>
            <person name="Mulvaney E."/>
            <person name="Ozersky P."/>
            <person name="Riley A."/>
            <person name="Strowmatt C."/>
            <person name="Wagner-McPherson C."/>
            <person name="Wollam A."/>
            <person name="Yoakum M."/>
            <person name="Bell M."/>
            <person name="Dedhia N."/>
            <person name="Parnell L."/>
            <person name="Shah R."/>
            <person name="Rodriguez M."/>
            <person name="Hoon See L."/>
            <person name="Vil D."/>
            <person name="Baker J."/>
            <person name="Kirchoff K."/>
            <person name="Toth K."/>
            <person name="King L."/>
            <person name="Bahret A."/>
            <person name="Miller B."/>
            <person name="Marra M.A."/>
            <person name="Martienssen R."/>
            <person name="McCombie W.R."/>
            <person name="Wilson R.K."/>
            <person name="Murphy G."/>
            <person name="Bancroft I."/>
            <person name="Volckaert G."/>
            <person name="Wambutt R."/>
            <person name="Duesterhoeft A."/>
            <person name="Stiekema W."/>
            <person name="Pohl T."/>
            <person name="Entian K.-D."/>
            <person name="Terryn N."/>
            <person name="Hartley N."/>
            <person name="Bent E."/>
            <person name="Johnson S."/>
            <person name="Langham S.-A."/>
            <person name="McCullagh B."/>
            <person name="Robben J."/>
            <person name="Grymonprez B."/>
            <person name="Zimmermann W."/>
            <person name="Ramsperger U."/>
            <person name="Wedler H."/>
            <person name="Balke K."/>
            <person name="Wedler E."/>
            <person name="Peters S."/>
            <person name="van Staveren M."/>
            <person name="Dirkse W."/>
            <person name="Mooijman P."/>
            <person name="Klein Lankhorst R."/>
            <person name="Weitzenegger T."/>
            <person name="Bothe G."/>
            <person name="Rose M."/>
            <person name="Hauf J."/>
            <person name="Berneiser S."/>
            <person name="Hempel S."/>
            <person name="Feldpausch M."/>
            <person name="Lamberth S."/>
            <person name="Villarroel R."/>
            <person name="Gielen J."/>
            <person name="Ardiles W."/>
            <person name="Bents O."/>
            <person name="Lemcke K."/>
            <person name="Kolesov G."/>
            <person name="Mayer K.F.X."/>
            <person name="Rudd S."/>
            <person name="Schoof H."/>
            <person name="Schueller C."/>
            <person name="Zaccaria P."/>
            <person name="Mewes H.-W."/>
            <person name="Bevan M."/>
            <person name="Fransz P.F."/>
        </authorList>
    </citation>
    <scope>NUCLEOTIDE SEQUENCE [LARGE SCALE GENOMIC DNA]</scope>
    <source>
        <strain>cv. Columbia</strain>
    </source>
</reference>
<reference key="2">
    <citation type="journal article" date="2017" name="Plant J.">
        <title>Araport11: a complete reannotation of the Arabidopsis thaliana reference genome.</title>
        <authorList>
            <person name="Cheng C.Y."/>
            <person name="Krishnakumar V."/>
            <person name="Chan A.P."/>
            <person name="Thibaud-Nissen F."/>
            <person name="Schobel S."/>
            <person name="Town C.D."/>
        </authorList>
    </citation>
    <scope>GENOME REANNOTATION</scope>
    <source>
        <strain>cv. Columbia</strain>
    </source>
</reference>
<reference key="3">
    <citation type="journal article" date="2003" name="Science">
        <title>Empirical analysis of transcriptional activity in the Arabidopsis genome.</title>
        <authorList>
            <person name="Yamada K."/>
            <person name="Lim J."/>
            <person name="Dale J.M."/>
            <person name="Chen H."/>
            <person name="Shinn P."/>
            <person name="Palm C.J."/>
            <person name="Southwick A.M."/>
            <person name="Wu H.C."/>
            <person name="Kim C.J."/>
            <person name="Nguyen M."/>
            <person name="Pham P.K."/>
            <person name="Cheuk R.F."/>
            <person name="Karlin-Newmann G."/>
            <person name="Liu S.X."/>
            <person name="Lam B."/>
            <person name="Sakano H."/>
            <person name="Wu T."/>
            <person name="Yu G."/>
            <person name="Miranda M."/>
            <person name="Quach H.L."/>
            <person name="Tripp M."/>
            <person name="Chang C.H."/>
            <person name="Lee J.M."/>
            <person name="Toriumi M.J."/>
            <person name="Chan M.M."/>
            <person name="Tang C.C."/>
            <person name="Onodera C.S."/>
            <person name="Deng J.M."/>
            <person name="Akiyama K."/>
            <person name="Ansari Y."/>
            <person name="Arakawa T."/>
            <person name="Banh J."/>
            <person name="Banno F."/>
            <person name="Bowser L."/>
            <person name="Brooks S.Y."/>
            <person name="Carninci P."/>
            <person name="Chao Q."/>
            <person name="Choy N."/>
            <person name="Enju A."/>
            <person name="Goldsmith A.D."/>
            <person name="Gurjal M."/>
            <person name="Hansen N.F."/>
            <person name="Hayashizaki Y."/>
            <person name="Johnson-Hopson C."/>
            <person name="Hsuan V.W."/>
            <person name="Iida K."/>
            <person name="Karnes M."/>
            <person name="Khan S."/>
            <person name="Koesema E."/>
            <person name="Ishida J."/>
            <person name="Jiang P.X."/>
            <person name="Jones T."/>
            <person name="Kawai J."/>
            <person name="Kamiya A."/>
            <person name="Meyers C."/>
            <person name="Nakajima M."/>
            <person name="Narusaka M."/>
            <person name="Seki M."/>
            <person name="Sakurai T."/>
            <person name="Satou M."/>
            <person name="Tamse R."/>
            <person name="Vaysberg M."/>
            <person name="Wallender E.K."/>
            <person name="Wong C."/>
            <person name="Yamamura Y."/>
            <person name="Yuan S."/>
            <person name="Shinozaki K."/>
            <person name="Davis R.W."/>
            <person name="Theologis A."/>
            <person name="Ecker J.R."/>
        </authorList>
    </citation>
    <scope>NUCLEOTIDE SEQUENCE [LARGE SCALE MRNA]</scope>
    <source>
        <strain>cv. Columbia</strain>
    </source>
</reference>
<accession>Q9LEU4</accession>
<accession>Q949W2</accession>
<sequence length="277" mass="31533">MAETLKEDSIMIREVWDYNLVEEFALIREIVDKFSYIAMDTEFPGVVLKPVATFKYNNDLNYRTLKENVDLLKLIQVGLTFSDENGNLPTCGTDKFCIWQFNFREFNIGEDIYASESIELLRQCGIDFKKNIEKGIDVVRFGELMMSSGIVLNDAISWVTFHGGYDFGYLVKLLTCKELPLKQADFFKLLYVYFPTVYDIKHLMTFCNGLFGGLNRLAELMGVERVGICHQAGSDSLLTLGSFRKLKERYFPGSTEKYTGVLYGLGVEDGTTTTVAN</sequence>
<name>CAF1J_ARATH</name>
<keyword id="KW-0963">Cytoplasm</keyword>
<keyword id="KW-0269">Exonuclease</keyword>
<keyword id="KW-0378">Hydrolase</keyword>
<keyword id="KW-0479">Metal-binding</keyword>
<keyword id="KW-0540">Nuclease</keyword>
<keyword id="KW-0539">Nucleus</keyword>
<keyword id="KW-1185">Reference proteome</keyword>
<keyword id="KW-0694">RNA-binding</keyword>
<keyword id="KW-0804">Transcription</keyword>
<keyword id="KW-0805">Transcription regulation</keyword>
<dbReference type="EC" id="3.1.13.4"/>
<dbReference type="EMBL" id="AL365234">
    <property type="protein sequence ID" value="CAB96851.1"/>
    <property type="molecule type" value="Genomic_DNA"/>
</dbReference>
<dbReference type="EMBL" id="CP002688">
    <property type="protein sequence ID" value="AED91615.1"/>
    <property type="molecule type" value="Genomic_DNA"/>
</dbReference>
<dbReference type="EMBL" id="AY050855">
    <property type="protein sequence ID" value="AAK92792.1"/>
    <property type="molecule type" value="mRNA"/>
</dbReference>
<dbReference type="EMBL" id="AY142489">
    <property type="protein sequence ID" value="AAN13040.1"/>
    <property type="molecule type" value="mRNA"/>
</dbReference>
<dbReference type="PIR" id="T50805">
    <property type="entry name" value="T50805"/>
</dbReference>
<dbReference type="RefSeq" id="NP_196657.1">
    <property type="nucleotide sequence ID" value="NM_121134.4"/>
</dbReference>
<dbReference type="SMR" id="Q9LEU4"/>
<dbReference type="FunCoup" id="Q9LEU4">
    <property type="interactions" value="4942"/>
</dbReference>
<dbReference type="STRING" id="3702.Q9LEU4"/>
<dbReference type="iPTMnet" id="Q9LEU4"/>
<dbReference type="PaxDb" id="3702-AT5G10960.1"/>
<dbReference type="ProteomicsDB" id="240277"/>
<dbReference type="DNASU" id="830963"/>
<dbReference type="EnsemblPlants" id="AT5G10960.1">
    <property type="protein sequence ID" value="AT5G10960.1"/>
    <property type="gene ID" value="AT5G10960"/>
</dbReference>
<dbReference type="GeneID" id="830963"/>
<dbReference type="Gramene" id="AT5G10960.1">
    <property type="protein sequence ID" value="AT5G10960.1"/>
    <property type="gene ID" value="AT5G10960"/>
</dbReference>
<dbReference type="KEGG" id="ath:AT5G10960"/>
<dbReference type="Araport" id="AT5G10960"/>
<dbReference type="TAIR" id="AT5G10960">
    <property type="gene designation" value="CAF1I"/>
</dbReference>
<dbReference type="eggNOG" id="KOG0304">
    <property type="taxonomic scope" value="Eukaryota"/>
</dbReference>
<dbReference type="HOGENOM" id="CLU_027974_0_1_1"/>
<dbReference type="InParanoid" id="Q9LEU4"/>
<dbReference type="OMA" id="NANYCNL"/>
<dbReference type="PhylomeDB" id="Q9LEU4"/>
<dbReference type="PRO" id="PR:Q9LEU4"/>
<dbReference type="Proteomes" id="UP000006548">
    <property type="component" value="Chromosome 5"/>
</dbReference>
<dbReference type="ExpressionAtlas" id="Q9LEU4">
    <property type="expression patterns" value="baseline and differential"/>
</dbReference>
<dbReference type="GO" id="GO:0030014">
    <property type="term" value="C:CCR4-NOT complex"/>
    <property type="evidence" value="ECO:0007669"/>
    <property type="project" value="InterPro"/>
</dbReference>
<dbReference type="GO" id="GO:0005737">
    <property type="term" value="C:cytoplasm"/>
    <property type="evidence" value="ECO:0007669"/>
    <property type="project" value="UniProtKB-SubCell"/>
</dbReference>
<dbReference type="GO" id="GO:0005634">
    <property type="term" value="C:nucleus"/>
    <property type="evidence" value="ECO:0007669"/>
    <property type="project" value="UniProtKB-SubCell"/>
</dbReference>
<dbReference type="GO" id="GO:0046872">
    <property type="term" value="F:metal ion binding"/>
    <property type="evidence" value="ECO:0007669"/>
    <property type="project" value="UniProtKB-KW"/>
</dbReference>
<dbReference type="GO" id="GO:0004535">
    <property type="term" value="F:poly(A)-specific ribonuclease activity"/>
    <property type="evidence" value="ECO:0007669"/>
    <property type="project" value="UniProtKB-EC"/>
</dbReference>
<dbReference type="GO" id="GO:0003723">
    <property type="term" value="F:RNA binding"/>
    <property type="evidence" value="ECO:0007669"/>
    <property type="project" value="UniProtKB-KW"/>
</dbReference>
<dbReference type="FunFam" id="3.30.420.10:FF:000027">
    <property type="entry name" value="Putative CCR4-associated factor 1 7"/>
    <property type="match status" value="1"/>
</dbReference>
<dbReference type="Gene3D" id="3.30.420.10">
    <property type="entry name" value="Ribonuclease H-like superfamily/Ribonuclease H"/>
    <property type="match status" value="1"/>
</dbReference>
<dbReference type="InterPro" id="IPR039637">
    <property type="entry name" value="CNOT7/CNOT8/Pop2"/>
</dbReference>
<dbReference type="InterPro" id="IPR006941">
    <property type="entry name" value="RNase_CAF1"/>
</dbReference>
<dbReference type="InterPro" id="IPR012337">
    <property type="entry name" value="RNaseH-like_sf"/>
</dbReference>
<dbReference type="InterPro" id="IPR036397">
    <property type="entry name" value="RNaseH_sf"/>
</dbReference>
<dbReference type="PANTHER" id="PTHR10797">
    <property type="entry name" value="CCR4-NOT TRANSCRIPTION COMPLEX SUBUNIT"/>
    <property type="match status" value="1"/>
</dbReference>
<dbReference type="Pfam" id="PF04857">
    <property type="entry name" value="CAF1"/>
    <property type="match status" value="1"/>
</dbReference>
<dbReference type="SUPFAM" id="SSF53098">
    <property type="entry name" value="Ribonuclease H-like"/>
    <property type="match status" value="1"/>
</dbReference>
<proteinExistence type="evidence at transcript level"/>